<proteinExistence type="inferred from homology"/>
<evidence type="ECO:0000255" key="1">
    <source>
        <dbReference type="HAMAP-Rule" id="MF_01464"/>
    </source>
</evidence>
<organism>
    <name type="scientific">Anaerolinea thermophila (strain DSM 14523 / JCM 11388 / NBRC 100420 / UNI-1)</name>
    <dbReference type="NCBI Taxonomy" id="926569"/>
    <lineage>
        <taxon>Bacteria</taxon>
        <taxon>Bacillati</taxon>
        <taxon>Chloroflexota</taxon>
        <taxon>Anaerolineae</taxon>
        <taxon>Anaerolineales</taxon>
        <taxon>Anaerolineaceae</taxon>
        <taxon>Anaerolinea</taxon>
    </lineage>
</organism>
<dbReference type="EMBL" id="AP012029">
    <property type="protein sequence ID" value="BAJ63703.1"/>
    <property type="molecule type" value="Genomic_DNA"/>
</dbReference>
<dbReference type="RefSeq" id="WP_013560082.1">
    <property type="nucleotide sequence ID" value="NC_014960.1"/>
</dbReference>
<dbReference type="SMR" id="E8N5I9"/>
<dbReference type="STRING" id="926569.ANT_16770"/>
<dbReference type="KEGG" id="atm:ANT_16770"/>
<dbReference type="eggNOG" id="COG0341">
    <property type="taxonomic scope" value="Bacteria"/>
</dbReference>
<dbReference type="HOGENOM" id="CLU_050012_0_0_0"/>
<dbReference type="InParanoid" id="E8N5I9"/>
<dbReference type="OrthoDB" id="9805019at2"/>
<dbReference type="Proteomes" id="UP000008922">
    <property type="component" value="Chromosome"/>
</dbReference>
<dbReference type="GO" id="GO:0005886">
    <property type="term" value="C:plasma membrane"/>
    <property type="evidence" value="ECO:0007669"/>
    <property type="project" value="UniProtKB-SubCell"/>
</dbReference>
<dbReference type="GO" id="GO:0015450">
    <property type="term" value="F:protein-transporting ATPase activity"/>
    <property type="evidence" value="ECO:0007669"/>
    <property type="project" value="InterPro"/>
</dbReference>
<dbReference type="GO" id="GO:0065002">
    <property type="term" value="P:intracellular protein transmembrane transport"/>
    <property type="evidence" value="ECO:0007669"/>
    <property type="project" value="UniProtKB-UniRule"/>
</dbReference>
<dbReference type="GO" id="GO:0006605">
    <property type="term" value="P:protein targeting"/>
    <property type="evidence" value="ECO:0007669"/>
    <property type="project" value="UniProtKB-UniRule"/>
</dbReference>
<dbReference type="GO" id="GO:0043952">
    <property type="term" value="P:protein transport by the Sec complex"/>
    <property type="evidence" value="ECO:0007669"/>
    <property type="project" value="UniProtKB-UniRule"/>
</dbReference>
<dbReference type="Gene3D" id="1.20.1640.10">
    <property type="entry name" value="Multidrug efflux transporter AcrB transmembrane domain"/>
    <property type="match status" value="1"/>
</dbReference>
<dbReference type="HAMAP" id="MF_01464_B">
    <property type="entry name" value="SecF_B"/>
    <property type="match status" value="1"/>
</dbReference>
<dbReference type="InterPro" id="IPR022813">
    <property type="entry name" value="SecD/SecF_arch_bac"/>
</dbReference>
<dbReference type="InterPro" id="IPR022645">
    <property type="entry name" value="SecD/SecF_bac"/>
</dbReference>
<dbReference type="InterPro" id="IPR022646">
    <property type="entry name" value="SecD/SecF_CS"/>
</dbReference>
<dbReference type="InterPro" id="IPR048634">
    <property type="entry name" value="SecD_SecF_C"/>
</dbReference>
<dbReference type="InterPro" id="IPR005665">
    <property type="entry name" value="SecF_bac"/>
</dbReference>
<dbReference type="NCBIfam" id="TIGR00966">
    <property type="entry name" value="transloc_SecF"/>
    <property type="match status" value="1"/>
</dbReference>
<dbReference type="PANTHER" id="PTHR30081:SF8">
    <property type="entry name" value="PROTEIN TRANSLOCASE SUBUNIT SECF"/>
    <property type="match status" value="1"/>
</dbReference>
<dbReference type="PANTHER" id="PTHR30081">
    <property type="entry name" value="PROTEIN-EXPORT MEMBRANE PROTEIN SEC"/>
    <property type="match status" value="1"/>
</dbReference>
<dbReference type="Pfam" id="PF07549">
    <property type="entry name" value="Sec_GG"/>
    <property type="match status" value="1"/>
</dbReference>
<dbReference type="Pfam" id="PF02355">
    <property type="entry name" value="SecD_SecF_C"/>
    <property type="match status" value="1"/>
</dbReference>
<dbReference type="PRINTS" id="PR01755">
    <property type="entry name" value="SECFTRNLCASE"/>
</dbReference>
<dbReference type="SUPFAM" id="SSF82866">
    <property type="entry name" value="Multidrug efflux transporter AcrB transmembrane domain"/>
    <property type="match status" value="1"/>
</dbReference>
<protein>
    <recommendedName>
        <fullName>Protein translocase subunit SecF</fullName>
    </recommendedName>
</protein>
<name>SECF_ANATU</name>
<sequence length="308" mass="33789">MLNILGKRYLFFAISLAMIIPGLIVMAIFGLPLSIDFKGGSLLEVEFASKTLPAPAEVVALYNDLGITDAQVTTTGNNTLLVRSSFIDDDVRAKVVQEMNSRFNDTVTVLRFDSVGPTIGKEVAGRATLAVSIAALAVIIYITWAFRGVHNAFRYGVCAIIAMIHDVLVVISLVSIGGVLFGWQVDALFLTALLSVIGFSVQDKVVVFDRIRENSQIYRKLDFEKLANHSIVQTLQRSINTQLMTVEYMLLAIALFGGITLREFAIILLVGLFMGTYSSIFIAAPSLVIWESGEWRNWFKRGAKPASA</sequence>
<reference key="1">
    <citation type="submission" date="2010-12" db="EMBL/GenBank/DDBJ databases">
        <title>Whole genome sequence of Anaerolinea thermophila UNI-1.</title>
        <authorList>
            <person name="Narita-Yamada S."/>
            <person name="Kishi E."/>
            <person name="Watanabe Y."/>
            <person name="Takasaki K."/>
            <person name="Ankai A."/>
            <person name="Oguchi A."/>
            <person name="Fukui S."/>
            <person name="Takahashi M."/>
            <person name="Yashiro I."/>
            <person name="Hosoyama A."/>
            <person name="Sekiguchi Y."/>
            <person name="Hanada S."/>
            <person name="Fujita N."/>
        </authorList>
    </citation>
    <scope>NUCLEOTIDE SEQUENCE [LARGE SCALE GENOMIC DNA]</scope>
    <source>
        <strain>DSM 14523 / JCM 11388 / NBRC 100420 / UNI-1</strain>
    </source>
</reference>
<accession>E8N5I9</accession>
<comment type="function">
    <text evidence="1">Part of the Sec protein translocase complex. Interacts with the SecYEG preprotein conducting channel. SecDF uses the proton motive force (PMF) to complete protein translocation after the ATP-dependent function of SecA.</text>
</comment>
<comment type="subunit">
    <text evidence="1">Forms a complex with SecD. Part of the essential Sec protein translocation apparatus which comprises SecA, SecYEG and auxiliary proteins SecDF. Other proteins may also be involved.</text>
</comment>
<comment type="subcellular location">
    <subcellularLocation>
        <location evidence="1">Cell membrane</location>
        <topology evidence="1">Multi-pass membrane protein</topology>
    </subcellularLocation>
</comment>
<comment type="similarity">
    <text evidence="1">Belongs to the SecD/SecF family. SecF subfamily.</text>
</comment>
<keyword id="KW-1003">Cell membrane</keyword>
<keyword id="KW-0472">Membrane</keyword>
<keyword id="KW-0653">Protein transport</keyword>
<keyword id="KW-1185">Reference proteome</keyword>
<keyword id="KW-0811">Translocation</keyword>
<keyword id="KW-0812">Transmembrane</keyword>
<keyword id="KW-1133">Transmembrane helix</keyword>
<keyword id="KW-0813">Transport</keyword>
<feature type="chain" id="PRO_0000412692" description="Protein translocase subunit SecF">
    <location>
        <begin position="1"/>
        <end position="308"/>
    </location>
</feature>
<feature type="transmembrane region" description="Helical" evidence="1">
    <location>
        <begin position="10"/>
        <end position="30"/>
    </location>
</feature>
<feature type="transmembrane region" description="Helical" evidence="1">
    <location>
        <begin position="129"/>
        <end position="149"/>
    </location>
</feature>
<feature type="transmembrane region" description="Helical" evidence="1">
    <location>
        <begin position="160"/>
        <end position="180"/>
    </location>
</feature>
<feature type="transmembrane region" description="Helical" evidence="1">
    <location>
        <begin position="181"/>
        <end position="201"/>
    </location>
</feature>
<feature type="transmembrane region" description="Helical" evidence="1">
    <location>
        <begin position="241"/>
        <end position="261"/>
    </location>
</feature>
<feature type="transmembrane region" description="Helical" evidence="1">
    <location>
        <begin position="264"/>
        <end position="284"/>
    </location>
</feature>
<gene>
    <name evidence="1" type="primary">secF</name>
    <name type="ordered locus">ANT_16770</name>
</gene>